<comment type="function">
    <text evidence="1">This protein is one of the early assembly proteins of the 50S ribosomal subunit, although it is not seen to bind rRNA by itself. It is important during the early stages of 50S assembly.</text>
</comment>
<comment type="subunit">
    <text evidence="1">Part of the 50S ribosomal subunit.</text>
</comment>
<comment type="similarity">
    <text evidence="1">Belongs to the universal ribosomal protein uL13 family.</text>
</comment>
<organism>
    <name type="scientific">Citrifermentans bemidjiense (strain ATCC BAA-1014 / DSM 16622 / JCM 12645 / Bem)</name>
    <name type="common">Geobacter bemidjiensis</name>
    <dbReference type="NCBI Taxonomy" id="404380"/>
    <lineage>
        <taxon>Bacteria</taxon>
        <taxon>Pseudomonadati</taxon>
        <taxon>Thermodesulfobacteriota</taxon>
        <taxon>Desulfuromonadia</taxon>
        <taxon>Geobacterales</taxon>
        <taxon>Geobacteraceae</taxon>
        <taxon>Citrifermentans</taxon>
    </lineage>
</organism>
<gene>
    <name evidence="1" type="primary">rplM</name>
    <name type="ordered locus">Gbem_0912</name>
</gene>
<keyword id="KW-1185">Reference proteome</keyword>
<keyword id="KW-0687">Ribonucleoprotein</keyword>
<keyword id="KW-0689">Ribosomal protein</keyword>
<name>RL13_CITBB</name>
<feature type="chain" id="PRO_1000144134" description="Large ribosomal subunit protein uL13">
    <location>
        <begin position="1"/>
        <end position="142"/>
    </location>
</feature>
<dbReference type="EMBL" id="CP001124">
    <property type="protein sequence ID" value="ACH37933.1"/>
    <property type="molecule type" value="Genomic_DNA"/>
</dbReference>
<dbReference type="RefSeq" id="WP_012529345.1">
    <property type="nucleotide sequence ID" value="NC_011146.1"/>
</dbReference>
<dbReference type="SMR" id="B5EFM9"/>
<dbReference type="STRING" id="404380.Gbem_0912"/>
<dbReference type="KEGG" id="gbm:Gbem_0912"/>
<dbReference type="eggNOG" id="COG0102">
    <property type="taxonomic scope" value="Bacteria"/>
</dbReference>
<dbReference type="HOGENOM" id="CLU_082184_2_2_7"/>
<dbReference type="OrthoDB" id="9801330at2"/>
<dbReference type="Proteomes" id="UP000008825">
    <property type="component" value="Chromosome"/>
</dbReference>
<dbReference type="GO" id="GO:0022625">
    <property type="term" value="C:cytosolic large ribosomal subunit"/>
    <property type="evidence" value="ECO:0007669"/>
    <property type="project" value="TreeGrafter"/>
</dbReference>
<dbReference type="GO" id="GO:0003729">
    <property type="term" value="F:mRNA binding"/>
    <property type="evidence" value="ECO:0007669"/>
    <property type="project" value="TreeGrafter"/>
</dbReference>
<dbReference type="GO" id="GO:0003735">
    <property type="term" value="F:structural constituent of ribosome"/>
    <property type="evidence" value="ECO:0007669"/>
    <property type="project" value="InterPro"/>
</dbReference>
<dbReference type="GO" id="GO:0017148">
    <property type="term" value="P:negative regulation of translation"/>
    <property type="evidence" value="ECO:0007669"/>
    <property type="project" value="TreeGrafter"/>
</dbReference>
<dbReference type="GO" id="GO:0006412">
    <property type="term" value="P:translation"/>
    <property type="evidence" value="ECO:0007669"/>
    <property type="project" value="UniProtKB-UniRule"/>
</dbReference>
<dbReference type="CDD" id="cd00392">
    <property type="entry name" value="Ribosomal_L13"/>
    <property type="match status" value="1"/>
</dbReference>
<dbReference type="FunFam" id="3.90.1180.10:FF:000001">
    <property type="entry name" value="50S ribosomal protein L13"/>
    <property type="match status" value="1"/>
</dbReference>
<dbReference type="Gene3D" id="3.90.1180.10">
    <property type="entry name" value="Ribosomal protein L13"/>
    <property type="match status" value="1"/>
</dbReference>
<dbReference type="HAMAP" id="MF_01366">
    <property type="entry name" value="Ribosomal_uL13"/>
    <property type="match status" value="1"/>
</dbReference>
<dbReference type="InterPro" id="IPR005822">
    <property type="entry name" value="Ribosomal_uL13"/>
</dbReference>
<dbReference type="InterPro" id="IPR005823">
    <property type="entry name" value="Ribosomal_uL13_bac-type"/>
</dbReference>
<dbReference type="InterPro" id="IPR036899">
    <property type="entry name" value="Ribosomal_uL13_sf"/>
</dbReference>
<dbReference type="NCBIfam" id="TIGR01066">
    <property type="entry name" value="rplM_bact"/>
    <property type="match status" value="1"/>
</dbReference>
<dbReference type="PANTHER" id="PTHR11545:SF2">
    <property type="entry name" value="LARGE RIBOSOMAL SUBUNIT PROTEIN UL13M"/>
    <property type="match status" value="1"/>
</dbReference>
<dbReference type="PANTHER" id="PTHR11545">
    <property type="entry name" value="RIBOSOMAL PROTEIN L13"/>
    <property type="match status" value="1"/>
</dbReference>
<dbReference type="Pfam" id="PF00572">
    <property type="entry name" value="Ribosomal_L13"/>
    <property type="match status" value="1"/>
</dbReference>
<dbReference type="PIRSF" id="PIRSF002181">
    <property type="entry name" value="Ribosomal_L13"/>
    <property type="match status" value="1"/>
</dbReference>
<dbReference type="SUPFAM" id="SSF52161">
    <property type="entry name" value="Ribosomal protein L13"/>
    <property type="match status" value="1"/>
</dbReference>
<protein>
    <recommendedName>
        <fullName evidence="1">Large ribosomal subunit protein uL13</fullName>
    </recommendedName>
    <alternativeName>
        <fullName evidence="2">50S ribosomal protein L13</fullName>
    </alternativeName>
</protein>
<accession>B5EFM9</accession>
<evidence type="ECO:0000255" key="1">
    <source>
        <dbReference type="HAMAP-Rule" id="MF_01366"/>
    </source>
</evidence>
<evidence type="ECO:0000305" key="2"/>
<reference key="1">
    <citation type="submission" date="2008-07" db="EMBL/GenBank/DDBJ databases">
        <title>Complete sequence of Geobacter bemidjiensis BEM.</title>
        <authorList>
            <consortium name="US DOE Joint Genome Institute"/>
            <person name="Lucas S."/>
            <person name="Copeland A."/>
            <person name="Lapidus A."/>
            <person name="Glavina del Rio T."/>
            <person name="Dalin E."/>
            <person name="Tice H."/>
            <person name="Bruce D."/>
            <person name="Goodwin L."/>
            <person name="Pitluck S."/>
            <person name="Kiss H."/>
            <person name="Brettin T."/>
            <person name="Detter J.C."/>
            <person name="Han C."/>
            <person name="Kuske C.R."/>
            <person name="Schmutz J."/>
            <person name="Larimer F."/>
            <person name="Land M."/>
            <person name="Hauser L."/>
            <person name="Kyrpides N."/>
            <person name="Lykidis A."/>
            <person name="Lovley D."/>
            <person name="Richardson P."/>
        </authorList>
    </citation>
    <scope>NUCLEOTIDE SEQUENCE [LARGE SCALE GENOMIC DNA]</scope>
    <source>
        <strain>ATCC BAA-1014 / DSM 16622 / JCM 12645 / Bem</strain>
    </source>
</reference>
<sequence length="142" mass="15750">MKTQVAKKEEVTRDWYLVDVDNKVLGRVATEIANVLRGKNKPTFTPSVDTGDFVIVVNAEKIALTGRKLADKTYYSHSSYPGGLKEITAGKLLDKKPEELLKKAVKGMLPKNKLARHMLKKLKIYSGGAHPHAAQNPKNLNI</sequence>
<proteinExistence type="inferred from homology"/>